<gene>
    <name evidence="1" type="primary">kdsB</name>
    <name type="ordered locus">Oant_0017</name>
</gene>
<proteinExistence type="inferred from homology"/>
<feature type="chain" id="PRO_0000370110" description="3-deoxy-manno-octulosonate cytidylyltransferase">
    <location>
        <begin position="1"/>
        <end position="249"/>
    </location>
</feature>
<sequence length="249" mass="27173">MLQTLKTLTLIPARMASTRLPNKPLADICGKPMIVHVADRAAAAKLGRTVVATDSEEIFAIVTAHGHEAIMTREDHESGSDRIYEALMKVDPAGEFDAVVNVQGDLPTIDPDIIRRALLPLEDGPADIATLGVEIEEESEKTNPSVVKIVGSPLAGNSRLRALYFTRATAPYGEGPLYHHIGLYAYRRSALERFVKLGPSPLEKREKLEQLRALEAGMRIDVELVRTVPLGVDTQADLDRARILVAQGI</sequence>
<evidence type="ECO:0000255" key="1">
    <source>
        <dbReference type="HAMAP-Rule" id="MF_00057"/>
    </source>
</evidence>
<organism>
    <name type="scientific">Brucella anthropi (strain ATCC 49188 / DSM 6882 / CCUG 24695 / JCM 21032 / LMG 3331 / NBRC 15819 / NCTC 12168 / Alc 37)</name>
    <name type="common">Ochrobactrum anthropi</name>
    <dbReference type="NCBI Taxonomy" id="439375"/>
    <lineage>
        <taxon>Bacteria</taxon>
        <taxon>Pseudomonadati</taxon>
        <taxon>Pseudomonadota</taxon>
        <taxon>Alphaproteobacteria</taxon>
        <taxon>Hyphomicrobiales</taxon>
        <taxon>Brucellaceae</taxon>
        <taxon>Brucella/Ochrobactrum group</taxon>
        <taxon>Brucella</taxon>
    </lineage>
</organism>
<name>KDSB_BRUA4</name>
<accession>A6WUU4</accession>
<dbReference type="EC" id="2.7.7.38" evidence="1"/>
<dbReference type="EMBL" id="CP000758">
    <property type="protein sequence ID" value="ABS12748.1"/>
    <property type="molecule type" value="Genomic_DNA"/>
</dbReference>
<dbReference type="RefSeq" id="WP_011982258.1">
    <property type="nucleotide sequence ID" value="NC_009667.1"/>
</dbReference>
<dbReference type="SMR" id="A6WUU4"/>
<dbReference type="STRING" id="439375.Oant_0017"/>
<dbReference type="KEGG" id="oan:Oant_0017"/>
<dbReference type="PATRIC" id="fig|439375.7.peg.17"/>
<dbReference type="eggNOG" id="COG1212">
    <property type="taxonomic scope" value="Bacteria"/>
</dbReference>
<dbReference type="HOGENOM" id="CLU_065038_0_1_5"/>
<dbReference type="UniPathway" id="UPA00030"/>
<dbReference type="UniPathway" id="UPA00358">
    <property type="reaction ID" value="UER00476"/>
</dbReference>
<dbReference type="Proteomes" id="UP000002301">
    <property type="component" value="Chromosome 1"/>
</dbReference>
<dbReference type="GO" id="GO:0005829">
    <property type="term" value="C:cytosol"/>
    <property type="evidence" value="ECO:0007669"/>
    <property type="project" value="TreeGrafter"/>
</dbReference>
<dbReference type="GO" id="GO:0008690">
    <property type="term" value="F:3-deoxy-manno-octulosonate cytidylyltransferase activity"/>
    <property type="evidence" value="ECO:0007669"/>
    <property type="project" value="UniProtKB-UniRule"/>
</dbReference>
<dbReference type="GO" id="GO:0033468">
    <property type="term" value="P:CMP-keto-3-deoxy-D-manno-octulosonic acid biosynthetic process"/>
    <property type="evidence" value="ECO:0007669"/>
    <property type="project" value="UniProtKB-UniRule"/>
</dbReference>
<dbReference type="GO" id="GO:0009103">
    <property type="term" value="P:lipopolysaccharide biosynthetic process"/>
    <property type="evidence" value="ECO:0007669"/>
    <property type="project" value="UniProtKB-UniRule"/>
</dbReference>
<dbReference type="CDD" id="cd02517">
    <property type="entry name" value="CMP-KDO-Synthetase"/>
    <property type="match status" value="1"/>
</dbReference>
<dbReference type="Gene3D" id="3.90.550.10">
    <property type="entry name" value="Spore Coat Polysaccharide Biosynthesis Protein SpsA, Chain A"/>
    <property type="match status" value="1"/>
</dbReference>
<dbReference type="HAMAP" id="MF_00057">
    <property type="entry name" value="KdsB"/>
    <property type="match status" value="1"/>
</dbReference>
<dbReference type="InterPro" id="IPR003329">
    <property type="entry name" value="Cytidylyl_trans"/>
</dbReference>
<dbReference type="InterPro" id="IPR004528">
    <property type="entry name" value="KdsB"/>
</dbReference>
<dbReference type="InterPro" id="IPR029044">
    <property type="entry name" value="Nucleotide-diphossugar_trans"/>
</dbReference>
<dbReference type="NCBIfam" id="TIGR00466">
    <property type="entry name" value="kdsB"/>
    <property type="match status" value="1"/>
</dbReference>
<dbReference type="NCBIfam" id="NF003948">
    <property type="entry name" value="PRK05450.1-1"/>
    <property type="match status" value="1"/>
</dbReference>
<dbReference type="NCBIfam" id="NF003952">
    <property type="entry name" value="PRK05450.1-5"/>
    <property type="match status" value="1"/>
</dbReference>
<dbReference type="PANTHER" id="PTHR42866">
    <property type="entry name" value="3-DEOXY-MANNO-OCTULOSONATE CYTIDYLYLTRANSFERASE"/>
    <property type="match status" value="1"/>
</dbReference>
<dbReference type="PANTHER" id="PTHR42866:SF2">
    <property type="entry name" value="3-DEOXY-MANNO-OCTULOSONATE CYTIDYLYLTRANSFERASE, MITOCHONDRIAL"/>
    <property type="match status" value="1"/>
</dbReference>
<dbReference type="Pfam" id="PF02348">
    <property type="entry name" value="CTP_transf_3"/>
    <property type="match status" value="1"/>
</dbReference>
<dbReference type="SUPFAM" id="SSF53448">
    <property type="entry name" value="Nucleotide-diphospho-sugar transferases"/>
    <property type="match status" value="1"/>
</dbReference>
<comment type="function">
    <text evidence="1">Activates KDO (a required 8-carbon sugar) for incorporation into bacterial lipopolysaccharide in Gram-negative bacteria.</text>
</comment>
<comment type="catalytic activity">
    <reaction evidence="1">
        <text>3-deoxy-alpha-D-manno-oct-2-ulosonate + CTP = CMP-3-deoxy-beta-D-manno-octulosonate + diphosphate</text>
        <dbReference type="Rhea" id="RHEA:23448"/>
        <dbReference type="ChEBI" id="CHEBI:33019"/>
        <dbReference type="ChEBI" id="CHEBI:37563"/>
        <dbReference type="ChEBI" id="CHEBI:85986"/>
        <dbReference type="ChEBI" id="CHEBI:85987"/>
        <dbReference type="EC" id="2.7.7.38"/>
    </reaction>
</comment>
<comment type="pathway">
    <text evidence="1">Nucleotide-sugar biosynthesis; CMP-3-deoxy-D-manno-octulosonate biosynthesis; CMP-3-deoxy-D-manno-octulosonate from 3-deoxy-D-manno-octulosonate and CTP: step 1/1.</text>
</comment>
<comment type="pathway">
    <text evidence="1">Bacterial outer membrane biogenesis; lipopolysaccharide biosynthesis.</text>
</comment>
<comment type="subcellular location">
    <subcellularLocation>
        <location evidence="1">Cytoplasm</location>
    </subcellularLocation>
</comment>
<comment type="similarity">
    <text evidence="1">Belongs to the KdsB family.</text>
</comment>
<keyword id="KW-0963">Cytoplasm</keyword>
<keyword id="KW-0448">Lipopolysaccharide biosynthesis</keyword>
<keyword id="KW-0548">Nucleotidyltransferase</keyword>
<keyword id="KW-1185">Reference proteome</keyword>
<keyword id="KW-0808">Transferase</keyword>
<protein>
    <recommendedName>
        <fullName evidence="1">3-deoxy-manno-octulosonate cytidylyltransferase</fullName>
        <ecNumber evidence="1">2.7.7.38</ecNumber>
    </recommendedName>
    <alternativeName>
        <fullName evidence="1">CMP-2-keto-3-deoxyoctulosonic acid synthase</fullName>
        <shortName evidence="1">CKS</shortName>
        <shortName evidence="1">CMP-KDO synthase</shortName>
    </alternativeName>
</protein>
<reference key="1">
    <citation type="journal article" date="2011" name="J. Bacteriol.">
        <title>Genome of Ochrobactrum anthropi ATCC 49188 T, a versatile opportunistic pathogen and symbiont of several eukaryotic hosts.</title>
        <authorList>
            <person name="Chain P.S."/>
            <person name="Lang D.M."/>
            <person name="Comerci D.J."/>
            <person name="Malfatti S.A."/>
            <person name="Vergez L.M."/>
            <person name="Shin M."/>
            <person name="Ugalde R.A."/>
            <person name="Garcia E."/>
            <person name="Tolmasky M.E."/>
        </authorList>
    </citation>
    <scope>NUCLEOTIDE SEQUENCE [LARGE SCALE GENOMIC DNA]</scope>
    <source>
        <strain>ATCC 49188 / DSM 6882 / CCUG 24695 / JCM 21032 / LMG 3331 / NBRC 15819 / NCTC 12168 / Alc 37</strain>
    </source>
</reference>